<keyword id="KW-0143">Chaperone</keyword>
<keyword id="KW-0256">Endoplasmic reticulum</keyword>
<keyword id="KW-0413">Isomerase</keyword>
<keyword id="KW-1185">Reference proteome</keyword>
<keyword id="KW-0697">Rotamase</keyword>
<keyword id="KW-0732">Signal</keyword>
<sequence length="226" mass="25515">MGITRNLILGLACLAFVSIAKALPHEPELGSARVVFQTSYGDIEFGFYPTVAPKTVDHIFKLVRLGGYNTNHFFRVDKGFVAQVADVASGRSAPMNEEQRKEAEKKIVGEFSDVKHVRGTLSMGRYDDPNSAQSSFSMLLGNAPHLDRQYAVFGKVTKGDETLSKLEEVPTRREGIFVMPTERITILSTYYYDTKMESCEEERSVLKRRLQASFVEVERQRMKCFP</sequence>
<name>CYP23_ARATH</name>
<evidence type="ECO:0000250" key="1"/>
<evidence type="ECO:0000255" key="2"/>
<evidence type="ECO:0000255" key="3">
    <source>
        <dbReference type="PROSITE-ProRule" id="PRU00156"/>
    </source>
</evidence>
<evidence type="ECO:0000269" key="4">
    <source>
    </source>
</evidence>
<evidence type="ECO:0000269" key="5">
    <source>
    </source>
</evidence>
<evidence type="ECO:0000305" key="6"/>
<protein>
    <recommendedName>
        <fullName>Peptidyl-prolyl cis-trans isomerase CYP23</fullName>
        <shortName>PPIase CYP23</shortName>
        <ecNumber>5.2.1.8</ecNumber>
    </recommendedName>
    <alternativeName>
        <fullName>Cyclophilin of 23 kDa</fullName>
    </alternativeName>
    <alternativeName>
        <fullName>Cyclophilin-23</fullName>
    </alternativeName>
</protein>
<comment type="function">
    <text evidence="1">PPIases accelerate the folding of proteins. It catalyzes the cis-trans isomerization of proline imidic peptide bonds in oligopeptides (By similarity).</text>
</comment>
<comment type="catalytic activity">
    <reaction>
        <text>[protein]-peptidylproline (omega=180) = [protein]-peptidylproline (omega=0)</text>
        <dbReference type="Rhea" id="RHEA:16237"/>
        <dbReference type="Rhea" id="RHEA-COMP:10747"/>
        <dbReference type="Rhea" id="RHEA-COMP:10748"/>
        <dbReference type="ChEBI" id="CHEBI:83833"/>
        <dbReference type="ChEBI" id="CHEBI:83834"/>
        <dbReference type="EC" id="5.2.1.8"/>
    </reaction>
</comment>
<comment type="subcellular location">
    <subcellularLocation>
        <location evidence="1">Endoplasmic reticulum</location>
    </subcellularLocation>
</comment>
<comment type="tissue specificity">
    <text evidence="4 5">Ubiquitous. Lower expression in roots.</text>
</comment>
<comment type="similarity">
    <text evidence="6">Belongs to the cyclophilin-type PPIase family.</text>
</comment>
<comment type="sequence caution" evidence="6">
    <conflict type="erroneous gene model prediction">
        <sequence resource="EMBL-CDS" id="AAD14500"/>
    </conflict>
</comment>
<reference key="1">
    <citation type="journal article" date="2000" name="Nature">
        <title>Sequence and analysis of chromosome 1 of the plant Arabidopsis thaliana.</title>
        <authorList>
            <person name="Theologis A."/>
            <person name="Ecker J.R."/>
            <person name="Palm C.J."/>
            <person name="Federspiel N.A."/>
            <person name="Kaul S."/>
            <person name="White O."/>
            <person name="Alonso J."/>
            <person name="Altafi H."/>
            <person name="Araujo R."/>
            <person name="Bowman C.L."/>
            <person name="Brooks S.Y."/>
            <person name="Buehler E."/>
            <person name="Chan A."/>
            <person name="Chao Q."/>
            <person name="Chen H."/>
            <person name="Cheuk R.F."/>
            <person name="Chin C.W."/>
            <person name="Chung M.K."/>
            <person name="Conn L."/>
            <person name="Conway A.B."/>
            <person name="Conway A.R."/>
            <person name="Creasy T.H."/>
            <person name="Dewar K."/>
            <person name="Dunn P."/>
            <person name="Etgu P."/>
            <person name="Feldblyum T.V."/>
            <person name="Feng J.-D."/>
            <person name="Fong B."/>
            <person name="Fujii C.Y."/>
            <person name="Gill J.E."/>
            <person name="Goldsmith A.D."/>
            <person name="Haas B."/>
            <person name="Hansen N.F."/>
            <person name="Hughes B."/>
            <person name="Huizar L."/>
            <person name="Hunter J.L."/>
            <person name="Jenkins J."/>
            <person name="Johnson-Hopson C."/>
            <person name="Khan S."/>
            <person name="Khaykin E."/>
            <person name="Kim C.J."/>
            <person name="Koo H.L."/>
            <person name="Kremenetskaia I."/>
            <person name="Kurtz D.B."/>
            <person name="Kwan A."/>
            <person name="Lam B."/>
            <person name="Langin-Hooper S."/>
            <person name="Lee A."/>
            <person name="Lee J.M."/>
            <person name="Lenz C.A."/>
            <person name="Li J.H."/>
            <person name="Li Y.-P."/>
            <person name="Lin X."/>
            <person name="Liu S.X."/>
            <person name="Liu Z.A."/>
            <person name="Luros J.S."/>
            <person name="Maiti R."/>
            <person name="Marziali A."/>
            <person name="Militscher J."/>
            <person name="Miranda M."/>
            <person name="Nguyen M."/>
            <person name="Nierman W.C."/>
            <person name="Osborne B.I."/>
            <person name="Pai G."/>
            <person name="Peterson J."/>
            <person name="Pham P.K."/>
            <person name="Rizzo M."/>
            <person name="Rooney T."/>
            <person name="Rowley D."/>
            <person name="Sakano H."/>
            <person name="Salzberg S.L."/>
            <person name="Schwartz J.R."/>
            <person name="Shinn P."/>
            <person name="Southwick A.M."/>
            <person name="Sun H."/>
            <person name="Tallon L.J."/>
            <person name="Tambunga G."/>
            <person name="Toriumi M.J."/>
            <person name="Town C.D."/>
            <person name="Utterback T."/>
            <person name="Van Aken S."/>
            <person name="Vaysberg M."/>
            <person name="Vysotskaia V.S."/>
            <person name="Walker M."/>
            <person name="Wu D."/>
            <person name="Yu G."/>
            <person name="Fraser C.M."/>
            <person name="Venter J.C."/>
            <person name="Davis R.W."/>
        </authorList>
    </citation>
    <scope>NUCLEOTIDE SEQUENCE [LARGE SCALE GENOMIC DNA]</scope>
    <source>
        <strain>cv. Columbia</strain>
    </source>
</reference>
<reference key="2">
    <citation type="journal article" date="2017" name="Plant J.">
        <title>Araport11: a complete reannotation of the Arabidopsis thaliana reference genome.</title>
        <authorList>
            <person name="Cheng C.Y."/>
            <person name="Krishnakumar V."/>
            <person name="Chan A.P."/>
            <person name="Thibaud-Nissen F."/>
            <person name="Schobel S."/>
            <person name="Town C.D."/>
        </authorList>
    </citation>
    <scope>GENOME REANNOTATION</scope>
    <source>
        <strain>cv. Columbia</strain>
    </source>
</reference>
<reference key="3">
    <citation type="journal article" date="2002" name="Science">
        <title>Functional annotation of a full-length Arabidopsis cDNA collection.</title>
        <authorList>
            <person name="Seki M."/>
            <person name="Narusaka M."/>
            <person name="Kamiya A."/>
            <person name="Ishida J."/>
            <person name="Satou M."/>
            <person name="Sakurai T."/>
            <person name="Nakajima M."/>
            <person name="Enju A."/>
            <person name="Akiyama K."/>
            <person name="Oono Y."/>
            <person name="Muramatsu M."/>
            <person name="Hayashizaki Y."/>
            <person name="Kawai J."/>
            <person name="Carninci P."/>
            <person name="Itoh M."/>
            <person name="Ishii Y."/>
            <person name="Arakawa T."/>
            <person name="Shibata K."/>
            <person name="Shinagawa A."/>
            <person name="Shinozaki K."/>
        </authorList>
    </citation>
    <scope>NUCLEOTIDE SEQUENCE [LARGE SCALE MRNA]</scope>
    <source>
        <strain>cv. Columbia</strain>
    </source>
</reference>
<reference key="4">
    <citation type="journal article" date="2003" name="Science">
        <title>Empirical analysis of transcriptional activity in the Arabidopsis genome.</title>
        <authorList>
            <person name="Yamada K."/>
            <person name="Lim J."/>
            <person name="Dale J.M."/>
            <person name="Chen H."/>
            <person name="Shinn P."/>
            <person name="Palm C.J."/>
            <person name="Southwick A.M."/>
            <person name="Wu H.C."/>
            <person name="Kim C.J."/>
            <person name="Nguyen M."/>
            <person name="Pham P.K."/>
            <person name="Cheuk R.F."/>
            <person name="Karlin-Newmann G."/>
            <person name="Liu S.X."/>
            <person name="Lam B."/>
            <person name="Sakano H."/>
            <person name="Wu T."/>
            <person name="Yu G."/>
            <person name="Miranda M."/>
            <person name="Quach H.L."/>
            <person name="Tripp M."/>
            <person name="Chang C.H."/>
            <person name="Lee J.M."/>
            <person name="Toriumi M.J."/>
            <person name="Chan M.M."/>
            <person name="Tang C.C."/>
            <person name="Onodera C.S."/>
            <person name="Deng J.M."/>
            <person name="Akiyama K."/>
            <person name="Ansari Y."/>
            <person name="Arakawa T."/>
            <person name="Banh J."/>
            <person name="Banno F."/>
            <person name="Bowser L."/>
            <person name="Brooks S.Y."/>
            <person name="Carninci P."/>
            <person name="Chao Q."/>
            <person name="Choy N."/>
            <person name="Enju A."/>
            <person name="Goldsmith A.D."/>
            <person name="Gurjal M."/>
            <person name="Hansen N.F."/>
            <person name="Hayashizaki Y."/>
            <person name="Johnson-Hopson C."/>
            <person name="Hsuan V.W."/>
            <person name="Iida K."/>
            <person name="Karnes M."/>
            <person name="Khan S."/>
            <person name="Koesema E."/>
            <person name="Ishida J."/>
            <person name="Jiang P.X."/>
            <person name="Jones T."/>
            <person name="Kawai J."/>
            <person name="Kamiya A."/>
            <person name="Meyers C."/>
            <person name="Nakajima M."/>
            <person name="Narusaka M."/>
            <person name="Seki M."/>
            <person name="Sakurai T."/>
            <person name="Satou M."/>
            <person name="Tamse R."/>
            <person name="Vaysberg M."/>
            <person name="Wallender E.K."/>
            <person name="Wong C."/>
            <person name="Yamamura Y."/>
            <person name="Yuan S."/>
            <person name="Shinozaki K."/>
            <person name="Davis R.W."/>
            <person name="Theologis A."/>
            <person name="Ecker J.R."/>
        </authorList>
    </citation>
    <scope>NUCLEOTIDE SEQUENCE [LARGE SCALE MRNA]</scope>
    <source>
        <strain>cv. Columbia</strain>
    </source>
</reference>
<reference key="5">
    <citation type="submission" date="2002-03" db="EMBL/GenBank/DDBJ databases">
        <title>Full-length cDNA from Arabidopsis thaliana.</title>
        <authorList>
            <person name="Brover V.V."/>
            <person name="Troukhan M.E."/>
            <person name="Alexandrov N.A."/>
            <person name="Lu Y.-P."/>
            <person name="Flavell R.B."/>
            <person name="Feldmann K.A."/>
        </authorList>
    </citation>
    <scope>NUCLEOTIDE SEQUENCE [LARGE SCALE MRNA]</scope>
</reference>
<reference key="6">
    <citation type="journal article" date="2004" name="Plant Physiol.">
        <title>Immunophilins and parvulins. Superfamily of peptidyl prolyl isomerases in Arabidopsis.</title>
        <authorList>
            <person name="He Z."/>
            <person name="Li L."/>
            <person name="Luan S."/>
        </authorList>
    </citation>
    <scope>TISSUE SPECIFICITY</scope>
    <scope>GENE FAMILY</scope>
    <scope>NOMENCLATURE</scope>
</reference>
<reference key="7">
    <citation type="journal article" date="2004" name="Plant Physiol.">
        <title>The Arabidopsis cyclophilin gene family.</title>
        <authorList>
            <person name="Romano P.G.N."/>
            <person name="Horton P."/>
            <person name="Gray J.E."/>
        </authorList>
    </citation>
    <scope>TISSUE SPECIFICITY</scope>
    <scope>GENE FAMILY</scope>
    <scope>NOMENCLATURE</scope>
</reference>
<accession>Q8LDR3</accession>
<accession>Q9ZVG4</accession>
<organism>
    <name type="scientific">Arabidopsis thaliana</name>
    <name type="common">Mouse-ear cress</name>
    <dbReference type="NCBI Taxonomy" id="3702"/>
    <lineage>
        <taxon>Eukaryota</taxon>
        <taxon>Viridiplantae</taxon>
        <taxon>Streptophyta</taxon>
        <taxon>Embryophyta</taxon>
        <taxon>Tracheophyta</taxon>
        <taxon>Spermatophyta</taxon>
        <taxon>Magnoliopsida</taxon>
        <taxon>eudicotyledons</taxon>
        <taxon>Gunneridae</taxon>
        <taxon>Pentapetalae</taxon>
        <taxon>rosids</taxon>
        <taxon>malvids</taxon>
        <taxon>Brassicales</taxon>
        <taxon>Brassicaceae</taxon>
        <taxon>Camelineae</taxon>
        <taxon>Arabidopsis</taxon>
    </lineage>
</organism>
<proteinExistence type="evidence at transcript level"/>
<dbReference type="EC" id="5.2.1.8"/>
<dbReference type="EMBL" id="AC005508">
    <property type="protein sequence ID" value="AAD14500.1"/>
    <property type="status" value="ALT_SEQ"/>
    <property type="molecule type" value="Genomic_DNA"/>
</dbReference>
<dbReference type="EMBL" id="CP002684">
    <property type="protein sequence ID" value="AEE30762.1"/>
    <property type="molecule type" value="Genomic_DNA"/>
</dbReference>
<dbReference type="EMBL" id="AK118273">
    <property type="protein sequence ID" value="BAC42891.1"/>
    <property type="molecule type" value="mRNA"/>
</dbReference>
<dbReference type="EMBL" id="BT005541">
    <property type="protein sequence ID" value="AAO63961.1"/>
    <property type="molecule type" value="mRNA"/>
</dbReference>
<dbReference type="EMBL" id="AY085848">
    <property type="protein sequence ID" value="AAM63062.1"/>
    <property type="molecule type" value="mRNA"/>
</dbReference>
<dbReference type="PIR" id="D86396">
    <property type="entry name" value="D86396"/>
</dbReference>
<dbReference type="RefSeq" id="NP_564267.1">
    <property type="nucleotide sequence ID" value="NM_102458.2"/>
</dbReference>
<dbReference type="SMR" id="Q8LDR3"/>
<dbReference type="FunCoup" id="Q8LDR3">
    <property type="interactions" value="344"/>
</dbReference>
<dbReference type="STRING" id="3702.Q8LDR3"/>
<dbReference type="PaxDb" id="3702-AT1G26940.1"/>
<dbReference type="ProteomicsDB" id="224695"/>
<dbReference type="EnsemblPlants" id="AT1G26940.1">
    <property type="protein sequence ID" value="AT1G26940.1"/>
    <property type="gene ID" value="AT1G26940"/>
</dbReference>
<dbReference type="GeneID" id="839584"/>
<dbReference type="Gramene" id="AT1G26940.1">
    <property type="protein sequence ID" value="AT1G26940.1"/>
    <property type="gene ID" value="AT1G26940"/>
</dbReference>
<dbReference type="KEGG" id="ath:AT1G26940"/>
<dbReference type="Araport" id="AT1G26940"/>
<dbReference type="TAIR" id="AT1G26940"/>
<dbReference type="eggNOG" id="KOG0884">
    <property type="taxonomic scope" value="Eukaryota"/>
</dbReference>
<dbReference type="HOGENOM" id="CLU_012062_16_6_1"/>
<dbReference type="InParanoid" id="Q8LDR3"/>
<dbReference type="OrthoDB" id="408413at2759"/>
<dbReference type="PhylomeDB" id="Q8LDR3"/>
<dbReference type="PRO" id="PR:Q8LDR3"/>
<dbReference type="Proteomes" id="UP000006548">
    <property type="component" value="Chromosome 1"/>
</dbReference>
<dbReference type="ExpressionAtlas" id="Q8LDR3">
    <property type="expression patterns" value="baseline and differential"/>
</dbReference>
<dbReference type="GO" id="GO:0005783">
    <property type="term" value="C:endoplasmic reticulum"/>
    <property type="evidence" value="ECO:0007669"/>
    <property type="project" value="UniProtKB-SubCell"/>
</dbReference>
<dbReference type="GO" id="GO:0005768">
    <property type="term" value="C:endosome"/>
    <property type="evidence" value="ECO:0007005"/>
    <property type="project" value="TAIR"/>
</dbReference>
<dbReference type="GO" id="GO:0005794">
    <property type="term" value="C:Golgi apparatus"/>
    <property type="evidence" value="ECO:0007005"/>
    <property type="project" value="TAIR"/>
</dbReference>
<dbReference type="GO" id="GO:0005802">
    <property type="term" value="C:trans-Golgi network"/>
    <property type="evidence" value="ECO:0007005"/>
    <property type="project" value="TAIR"/>
</dbReference>
<dbReference type="GO" id="GO:0003755">
    <property type="term" value="F:peptidyl-prolyl cis-trans isomerase activity"/>
    <property type="evidence" value="ECO:0007669"/>
    <property type="project" value="UniProtKB-KW"/>
</dbReference>
<dbReference type="CDD" id="cd00317">
    <property type="entry name" value="cyclophilin"/>
    <property type="match status" value="1"/>
</dbReference>
<dbReference type="FunFam" id="2.40.100.10:FF:000088">
    <property type="entry name" value="Peptidyl-prolyl cis-trans isomerase CYP23"/>
    <property type="match status" value="1"/>
</dbReference>
<dbReference type="Gene3D" id="2.40.100.10">
    <property type="entry name" value="Cyclophilin-like"/>
    <property type="match status" value="1"/>
</dbReference>
<dbReference type="InterPro" id="IPR029000">
    <property type="entry name" value="Cyclophilin-like_dom_sf"/>
</dbReference>
<dbReference type="InterPro" id="IPR002130">
    <property type="entry name" value="Cyclophilin-type_PPIase_dom"/>
</dbReference>
<dbReference type="InterPro" id="IPR044233">
    <property type="entry name" value="CYP23-like"/>
</dbReference>
<dbReference type="PANTHER" id="PTHR47511">
    <property type="entry name" value="PEPTIDYL-PROLYL CIS-TRANS ISOMERASE CYP23"/>
    <property type="match status" value="1"/>
</dbReference>
<dbReference type="PANTHER" id="PTHR47511:SF1">
    <property type="entry name" value="PEPTIDYL-PROLYL CIS-TRANS ISOMERASE CYP23"/>
    <property type="match status" value="1"/>
</dbReference>
<dbReference type="Pfam" id="PF00160">
    <property type="entry name" value="Pro_isomerase"/>
    <property type="match status" value="1"/>
</dbReference>
<dbReference type="SUPFAM" id="SSF50891">
    <property type="entry name" value="Cyclophilin-like"/>
    <property type="match status" value="1"/>
</dbReference>
<dbReference type="PROSITE" id="PS50072">
    <property type="entry name" value="CSA_PPIASE_2"/>
    <property type="match status" value="1"/>
</dbReference>
<gene>
    <name type="primary">CYP23</name>
    <name type="synonym">CYP23-1</name>
    <name type="ordered locus">At1g26940</name>
    <name type="ORF">T2P11.13</name>
</gene>
<feature type="signal peptide" evidence="2">
    <location>
        <begin position="1"/>
        <end position="22"/>
    </location>
</feature>
<feature type="chain" id="PRO_0000429938" description="Peptidyl-prolyl cis-trans isomerase CYP23">
    <location>
        <begin position="23"/>
        <end position="226"/>
    </location>
</feature>
<feature type="domain" description="PPIase cyclophilin-type" evidence="3">
    <location>
        <begin position="34"/>
        <end position="191"/>
    </location>
</feature>